<keyword id="KW-0235">DNA replication</keyword>
<keyword id="KW-0614">Plasmid</keyword>
<keyword id="KW-0615">Plasmid copy control</keyword>
<keyword id="KW-1185">Reference proteome</keyword>
<reference key="1">
    <citation type="journal article" date="1998" name="FEMS Microbiol. Lett.">
        <title>Structure and evolution of the leucine plasmids carried by the endosymbiont (Buchnera aphidicola) from aphids of the family Aphididae.</title>
        <authorList>
            <person name="Silva F.J."/>
            <person name="van Ham R.C.H.J."/>
            <person name="Sabater B."/>
            <person name="Latorre A."/>
        </authorList>
    </citation>
    <scope>NUCLEOTIDE SEQUENCE [GENOMIC DNA]</scope>
</reference>
<reference key="2">
    <citation type="journal article" date="2000" name="Nature">
        <title>Genome sequence of the endocellular bacterial symbiont of aphids Buchnera sp. APS.</title>
        <authorList>
            <person name="Shigenobu S."/>
            <person name="Watanabe H."/>
            <person name="Hattori M."/>
            <person name="Sakaki Y."/>
            <person name="Ishikawa H."/>
        </authorList>
    </citation>
    <scope>NUCLEOTIDE SEQUENCE [LARGE SCALE GENOMIC DNA]</scope>
    <source>
        <strain>APS</strain>
    </source>
</reference>
<sequence length="250" mass="28740">MPRKNYIYNLKPFFNPSKNERKKSTFICYAMKKVSEIDVARSHLNRALLPIDPKTGNVLPRFRRLNKHRACAMRAIVPAMLYYFNINSKLVEASIEKLADECGLSTLSDSGNKSITRASRLISEFLEPMGFVKCKKINSKSMSNYIPKKIFLTPMFFMLCGISPSEINHFLSKKIKPLKKLKKQEKSAFISFTDMKIISQLDERSARTKILNALINYYTASELTKIGPKGLKKKIDIEYSNLCNLYKKKS</sequence>
<accession>Q9ZEY9</accession>
<accession>Q9JR85</accession>
<accession>Q9KGQ1</accession>
<comment type="function">
    <text evidence="1">This protein is essential for plasmid replication; it is involved in copy control functions.</text>
</comment>
<comment type="similarity">
    <text evidence="2">Belongs to the IncFII RepA family.</text>
</comment>
<comment type="sequence caution" evidence="2">
    <conflict type="erroneous initiation">
        <sequence resource="EMBL-CDS" id="BAA95422"/>
    </conflict>
</comment>
<protein>
    <recommendedName>
        <fullName>Probable replication-associated protein repA2</fullName>
    </recommendedName>
</protein>
<evidence type="ECO:0000250" key="1"/>
<evidence type="ECO:0000305" key="2"/>
<gene>
    <name type="primary">repA2</name>
    <name type="ordered locus">BUpL03</name>
</gene>
<dbReference type="EMBL" id="AJ006878">
    <property type="protein sequence ID" value="CAA07304.1"/>
    <property type="molecule type" value="Genomic_DNA"/>
</dbReference>
<dbReference type="EMBL" id="AP001071">
    <property type="protein sequence ID" value="BAA95422.1"/>
    <property type="status" value="ALT_INIT"/>
    <property type="molecule type" value="Genomic_DNA"/>
</dbReference>
<dbReference type="RefSeq" id="NP_057967.1">
    <property type="nucleotide sequence ID" value="NC_002253.1"/>
</dbReference>
<dbReference type="RefSeq" id="WP_164927321.1">
    <property type="nucleotide sequence ID" value="NC_002253.1"/>
</dbReference>
<dbReference type="EnsemblBacteria" id="BAA95422">
    <property type="protein sequence ID" value="BAA95422"/>
    <property type="gene ID" value="BAA95422"/>
</dbReference>
<dbReference type="KEGG" id="buc:BUpL03"/>
<dbReference type="PATRIC" id="fig|107806.10.peg.9"/>
<dbReference type="HOGENOM" id="CLU_084990_0_0_6"/>
<dbReference type="Proteomes" id="UP000001806">
    <property type="component" value="Plasmid pLeu"/>
</dbReference>
<dbReference type="GO" id="GO:0006260">
    <property type="term" value="P:DNA replication"/>
    <property type="evidence" value="ECO:0007669"/>
    <property type="project" value="UniProtKB-KW"/>
</dbReference>
<dbReference type="GO" id="GO:0006276">
    <property type="term" value="P:plasmid maintenance"/>
    <property type="evidence" value="ECO:0007669"/>
    <property type="project" value="UniProtKB-KW"/>
</dbReference>
<dbReference type="InterPro" id="IPR003446">
    <property type="entry name" value="Plasmid_replication_init_RepA"/>
</dbReference>
<dbReference type="NCBIfam" id="NF040977">
    <property type="entry name" value="RepA_IncFII_LM"/>
    <property type="match status" value="1"/>
</dbReference>
<dbReference type="Pfam" id="PF02387">
    <property type="entry name" value="IncFII_repA"/>
    <property type="match status" value="2"/>
</dbReference>
<proteinExistence type="inferred from homology"/>
<geneLocation type="plasmid">
    <name>pLeu</name>
    <name>pBAp1</name>
</geneLocation>
<feature type="chain" id="PRO_0000216230" description="Probable replication-associated protein repA2">
    <location>
        <begin position="1"/>
        <end position="250"/>
    </location>
</feature>
<feature type="sequence conflict" description="In Ref. 1; CAA07304." evidence="2" ref="1">
    <original>N</original>
    <variation>D</variation>
    <location>
        <position position="87"/>
    </location>
</feature>
<name>REPA2_BUCAI</name>
<organism>
    <name type="scientific">Buchnera aphidicola subsp. Acyrthosiphon pisum (strain APS)</name>
    <name type="common">Acyrthosiphon pisum symbiotic bacterium</name>
    <dbReference type="NCBI Taxonomy" id="107806"/>
    <lineage>
        <taxon>Bacteria</taxon>
        <taxon>Pseudomonadati</taxon>
        <taxon>Pseudomonadota</taxon>
        <taxon>Gammaproteobacteria</taxon>
        <taxon>Enterobacterales</taxon>
        <taxon>Erwiniaceae</taxon>
        <taxon>Buchnera</taxon>
    </lineage>
</organism>